<gene>
    <name evidence="1" type="primary">arcA</name>
    <name type="ordered locus">MW2556</name>
</gene>
<reference key="1">
    <citation type="journal article" date="2002" name="Lancet">
        <title>Genome and virulence determinants of high virulence community-acquired MRSA.</title>
        <authorList>
            <person name="Baba T."/>
            <person name="Takeuchi F."/>
            <person name="Kuroda M."/>
            <person name="Yuzawa H."/>
            <person name="Aoki K."/>
            <person name="Oguchi A."/>
            <person name="Nagai Y."/>
            <person name="Iwama N."/>
            <person name="Asano K."/>
            <person name="Naimi T."/>
            <person name="Kuroda H."/>
            <person name="Cui L."/>
            <person name="Yamamoto K."/>
            <person name="Hiramatsu K."/>
        </authorList>
    </citation>
    <scope>NUCLEOTIDE SEQUENCE [LARGE SCALE GENOMIC DNA]</scope>
    <source>
        <strain>MW2</strain>
    </source>
</reference>
<name>ARCA_STAAW</name>
<feature type="chain" id="PRO_0000182239" description="Arginine deiminase">
    <location>
        <begin position="1"/>
        <end position="411"/>
    </location>
</feature>
<feature type="active site" description="Amidino-cysteine intermediate" evidence="1">
    <location>
        <position position="401"/>
    </location>
</feature>
<proteinExistence type="inferred from homology"/>
<protein>
    <recommendedName>
        <fullName evidence="1">Arginine deiminase</fullName>
        <shortName evidence="1">ADI</shortName>
        <ecNumber evidence="1">3.5.3.6</ecNumber>
    </recommendedName>
    <alternativeName>
        <fullName evidence="1">Arginine dihydrolase</fullName>
        <shortName evidence="1">AD</shortName>
    </alternativeName>
</protein>
<organism>
    <name type="scientific">Staphylococcus aureus (strain MW2)</name>
    <dbReference type="NCBI Taxonomy" id="196620"/>
    <lineage>
        <taxon>Bacteria</taxon>
        <taxon>Bacillati</taxon>
        <taxon>Bacillota</taxon>
        <taxon>Bacilli</taxon>
        <taxon>Bacillales</taxon>
        <taxon>Staphylococcaceae</taxon>
        <taxon>Staphylococcus</taxon>
    </lineage>
</organism>
<comment type="catalytic activity">
    <reaction evidence="1">
        <text>L-arginine + H2O = L-citrulline + NH4(+)</text>
        <dbReference type="Rhea" id="RHEA:19597"/>
        <dbReference type="ChEBI" id="CHEBI:15377"/>
        <dbReference type="ChEBI" id="CHEBI:28938"/>
        <dbReference type="ChEBI" id="CHEBI:32682"/>
        <dbReference type="ChEBI" id="CHEBI:57743"/>
        <dbReference type="EC" id="3.5.3.6"/>
    </reaction>
</comment>
<comment type="pathway">
    <text evidence="1">Amino-acid degradation; L-arginine degradation via ADI pathway; carbamoyl phosphate from L-arginine: step 1/2.</text>
</comment>
<comment type="subcellular location">
    <subcellularLocation>
        <location evidence="1">Cytoplasm</location>
    </subcellularLocation>
</comment>
<comment type="similarity">
    <text evidence="1">Belongs to the arginine deiminase family.</text>
</comment>
<accession>Q8NUK7</accession>
<sequence length="411" mass="46915">MTDGPIKVNSEIGALKTVLLKRPGKELENLVPDYLDGLLFDDIPYLEVAQKEHDHFAQVLREEGVEVLYLEKLAAESIENPQVRSEFIDDVLAESKKTILGHEEEIKALFATLSNQELVDKIMSGVRKEEINPKCTHLVEYMDDKYPFYLDPMPNLYFTRDPQASIGHGITINRMFWRARRRESIFIQYIVKHHPRFKDANIPIWLDRDCPFNIEGGDELVLSKDVLAIGVSERTSAQAIEKLARRIFENPQATFKKVVAIEIPTSRTFMHLDTVFTMIDYDKFTMHSAILKAEGNMNIFIIEYDDVNKDIAIKQSSHLKDTLEDVLGIDDIQFIPTGNGDVIDGAREQWNDGSNTLCIRPGVVVTYDRNYVSNDLLRQKGIKVIEISGSELVRGRGGPRCMSQPLFREDI</sequence>
<evidence type="ECO:0000255" key="1">
    <source>
        <dbReference type="HAMAP-Rule" id="MF_00242"/>
    </source>
</evidence>
<dbReference type="EC" id="3.5.3.6" evidence="1"/>
<dbReference type="EMBL" id="BA000033">
    <property type="protein sequence ID" value="BAB96421.1"/>
    <property type="molecule type" value="Genomic_DNA"/>
</dbReference>
<dbReference type="RefSeq" id="WP_000129411.1">
    <property type="nucleotide sequence ID" value="NC_003923.1"/>
</dbReference>
<dbReference type="SMR" id="Q8NUK7"/>
<dbReference type="KEGG" id="sam:MW2556"/>
<dbReference type="HOGENOM" id="CLU_052662_0_1_9"/>
<dbReference type="UniPathway" id="UPA00254">
    <property type="reaction ID" value="UER00364"/>
</dbReference>
<dbReference type="GO" id="GO:0005737">
    <property type="term" value="C:cytoplasm"/>
    <property type="evidence" value="ECO:0007669"/>
    <property type="project" value="UniProtKB-SubCell"/>
</dbReference>
<dbReference type="GO" id="GO:0016990">
    <property type="term" value="F:arginine deiminase activity"/>
    <property type="evidence" value="ECO:0007669"/>
    <property type="project" value="UniProtKB-UniRule"/>
</dbReference>
<dbReference type="GO" id="GO:0019547">
    <property type="term" value="P:arginine catabolic process to ornithine"/>
    <property type="evidence" value="ECO:0007669"/>
    <property type="project" value="UniProtKB-UniRule"/>
</dbReference>
<dbReference type="GO" id="GO:0019546">
    <property type="term" value="P:arginine deiminase pathway"/>
    <property type="evidence" value="ECO:0007669"/>
    <property type="project" value="TreeGrafter"/>
</dbReference>
<dbReference type="FunFam" id="1.10.3930.10:FF:000001">
    <property type="entry name" value="Arginine deiminase"/>
    <property type="match status" value="1"/>
</dbReference>
<dbReference type="Gene3D" id="1.10.3930.10">
    <property type="entry name" value="Arginine deiminase"/>
    <property type="match status" value="1"/>
</dbReference>
<dbReference type="Gene3D" id="3.75.10.10">
    <property type="entry name" value="L-arginine/glycine Amidinotransferase, Chain A"/>
    <property type="match status" value="1"/>
</dbReference>
<dbReference type="HAMAP" id="MF_00242">
    <property type="entry name" value="Arg_deiminase"/>
    <property type="match status" value="1"/>
</dbReference>
<dbReference type="InterPro" id="IPR003876">
    <property type="entry name" value="Arg_deiminase"/>
</dbReference>
<dbReference type="NCBIfam" id="TIGR01078">
    <property type="entry name" value="arcA"/>
    <property type="match status" value="1"/>
</dbReference>
<dbReference type="NCBIfam" id="NF002381">
    <property type="entry name" value="PRK01388.1"/>
    <property type="match status" value="1"/>
</dbReference>
<dbReference type="PANTHER" id="PTHR47271">
    <property type="entry name" value="ARGININE DEIMINASE"/>
    <property type="match status" value="1"/>
</dbReference>
<dbReference type="PANTHER" id="PTHR47271:SF2">
    <property type="entry name" value="ARGININE DEIMINASE"/>
    <property type="match status" value="1"/>
</dbReference>
<dbReference type="Pfam" id="PF02274">
    <property type="entry name" value="ADI"/>
    <property type="match status" value="1"/>
</dbReference>
<dbReference type="PIRSF" id="PIRSF006356">
    <property type="entry name" value="Arg_deiminase"/>
    <property type="match status" value="1"/>
</dbReference>
<dbReference type="PRINTS" id="PR01466">
    <property type="entry name" value="ARGDEIMINASE"/>
</dbReference>
<dbReference type="SUPFAM" id="SSF55909">
    <property type="entry name" value="Pentein"/>
    <property type="match status" value="1"/>
</dbReference>
<keyword id="KW-0056">Arginine metabolism</keyword>
<keyword id="KW-0963">Cytoplasm</keyword>
<keyword id="KW-0378">Hydrolase</keyword>